<organism>
    <name type="scientific">Bdellovibrio phage phiMH2K</name>
    <name type="common">Bacteriophage phiMH2K</name>
    <dbReference type="NCBI Taxonomy" id="145579"/>
    <lineage>
        <taxon>Viruses</taxon>
        <taxon>Monodnaviria</taxon>
        <taxon>Sangervirae</taxon>
        <taxon>Phixviricota</taxon>
        <taxon>Malgrandaviricetes</taxon>
        <taxon>Petitvirales</taxon>
        <taxon>Microviridae</taxon>
        <taxon>Gokushovirinae</taxon>
        <taxon>Bdellomicrovirus</taxon>
        <taxon>Bdellomicrovirus MH2K</taxon>
    </lineage>
</organism>
<dbReference type="EMBL" id="AF306496">
    <property type="protein sequence ID" value="AAG45350.1"/>
    <property type="molecule type" value="Genomic_DNA"/>
</dbReference>
<dbReference type="RefSeq" id="NP_073547.1">
    <property type="nucleotide sequence ID" value="NC_002643.1"/>
</dbReference>
<dbReference type="KEGG" id="vg:918750"/>
<dbReference type="Proteomes" id="UP000002418">
    <property type="component" value="Genome"/>
</dbReference>
<dbReference type="GO" id="GO:0033644">
    <property type="term" value="C:host cell membrane"/>
    <property type="evidence" value="ECO:0007669"/>
    <property type="project" value="UniProtKB-SubCell"/>
</dbReference>
<dbReference type="GO" id="GO:0016020">
    <property type="term" value="C:membrane"/>
    <property type="evidence" value="ECO:0007669"/>
    <property type="project" value="UniProtKB-KW"/>
</dbReference>
<feature type="chain" id="PRO_0000372058" description="Uncharacterized protein N">
    <location>
        <begin position="1"/>
        <end position="109"/>
    </location>
</feature>
<feature type="transmembrane region" description="Helical" evidence="1">
    <location>
        <begin position="42"/>
        <end position="62"/>
    </location>
</feature>
<feature type="region of interest" description="Disordered" evidence="2">
    <location>
        <begin position="1"/>
        <end position="25"/>
    </location>
</feature>
<feature type="region of interest" description="Disordered" evidence="2">
    <location>
        <begin position="84"/>
        <end position="109"/>
    </location>
</feature>
<feature type="compositionally biased region" description="Low complexity" evidence="2">
    <location>
        <begin position="8"/>
        <end position="22"/>
    </location>
</feature>
<feature type="compositionally biased region" description="Polar residues" evidence="2">
    <location>
        <begin position="91"/>
        <end position="102"/>
    </location>
</feature>
<protein>
    <recommendedName>
        <fullName>Uncharacterized protein N</fullName>
    </recommendedName>
</protein>
<keyword id="KW-1043">Host membrane</keyword>
<keyword id="KW-0472">Membrane</keyword>
<keyword id="KW-1185">Reference proteome</keyword>
<keyword id="KW-0812">Transmembrane</keyword>
<keyword id="KW-1133">Transmembrane helix</keyword>
<organismHost>
    <name type="scientific">Bdellovibrio bacteriovorus</name>
    <dbReference type="NCBI Taxonomy" id="959"/>
</organismHost>
<gene>
    <name type="ORF">ORFN</name>
</gene>
<comment type="subcellular location">
    <subcellularLocation>
        <location evidence="3">Host membrane</location>
        <topology evidence="3">Single-pass membrane protein</topology>
    </subcellularLocation>
</comment>
<accession>Q9G049</accession>
<reference key="1">
    <citation type="journal article" date="2002" name="J. Bacteriol.">
        <title>Microviridae, a family divided: isolation, characterization, and genome sequence of phiMH2K, a bacteriophage of the obligate intracellular parasitic bacterium Bdellovibrio bacteriovorus.</title>
        <authorList>
            <person name="Brentlinger K.L."/>
            <person name="Hafenstein S."/>
            <person name="Novak C.R."/>
            <person name="Fane B.A."/>
            <person name="Borgon R."/>
            <person name="McKenna R."/>
            <person name="Agbandje-McKenna M."/>
        </authorList>
    </citation>
    <scope>NUCLEOTIDE SEQUENCE [GENOMIC DNA]</scope>
</reference>
<sequence length="109" mass="12042">METKPNALTGTSLSSTSGQTTQKSITLQNSENKYIPQNSSETFGLMAILNLALLLWTLLATLRVTLQKNWPTETTKTTTITQFTTLQKNTPSAKNGLKNTTNKHSHEDM</sequence>
<evidence type="ECO:0000255" key="1"/>
<evidence type="ECO:0000256" key="2">
    <source>
        <dbReference type="SAM" id="MobiDB-lite"/>
    </source>
</evidence>
<evidence type="ECO:0000305" key="3"/>
<proteinExistence type="predicted"/>
<name>N_BPPHM</name>